<sequence>METEQQEETFTNTETNGKRPAEDMEEEQAFKRSRNTDEMVELRILLQSKNAGAVIGKGGKNIKALRTDYNASVSVPDSSGPERILSISADTETIGEILKKIIPTLEEYQHYKGSDFDCELRLLIHQSLAGGIIGVKGAKIKELRENTQTTIKLFQECCPHSTDRVVLIGGKPDRVVECIKIILDLISESPIKGRAQPYDPNFYDETYDYGGFTMMFDDRRGRPVGFPMRGRGGFDRMPPNRGGRPMPPSRRDYDDMSPRRGPPPPPPGRGGRGGSRARNLPLPPPPPPRGGDLMSYDRRGRPGDRYDGMMMQCHVDACDDMQPPELFEGGSGYDYSYAGGRGSYGDLGGPIITTQVTIPKDLAGSIIGKGGQRIKQIRHESGASIKIDEPLEGSEDRIITITGTQDQIQNAQYLLQNSVKQYSGKFF</sequence>
<name>HNRPK_CHICK</name>
<evidence type="ECO:0000250" key="1"/>
<evidence type="ECO:0000250" key="2">
    <source>
        <dbReference type="UniProtKB" id="P61978"/>
    </source>
</evidence>
<evidence type="ECO:0000255" key="3">
    <source>
        <dbReference type="PROSITE-ProRule" id="PRU00117"/>
    </source>
</evidence>
<evidence type="ECO:0000256" key="4">
    <source>
        <dbReference type="SAM" id="MobiDB-lite"/>
    </source>
</evidence>
<dbReference type="EMBL" id="AJ720731">
    <property type="protein sequence ID" value="CAG32390.1"/>
    <property type="molecule type" value="mRNA"/>
</dbReference>
<dbReference type="RefSeq" id="NP_001026556.1">
    <property type="nucleotide sequence ID" value="NM_001031385.1"/>
</dbReference>
<dbReference type="SMR" id="Q5ZIQ3"/>
<dbReference type="BioGRID" id="686119">
    <property type="interactions" value="1"/>
</dbReference>
<dbReference type="FunCoup" id="Q5ZIQ3">
    <property type="interactions" value="3491"/>
</dbReference>
<dbReference type="STRING" id="9031.ENSGALP00000061636"/>
<dbReference type="PaxDb" id="9031-ENSGALP00000023165"/>
<dbReference type="Ensembl" id="ENSGALT00000060444">
    <property type="protein sequence ID" value="ENSGALP00000047968"/>
    <property type="gene ID" value="ENSGALG00000040086"/>
</dbReference>
<dbReference type="Ensembl" id="ENSGALT00010000507.1">
    <property type="protein sequence ID" value="ENSGALP00010000281.1"/>
    <property type="gene ID" value="ENSGALG00010000262.1"/>
</dbReference>
<dbReference type="GeneID" id="426516"/>
<dbReference type="KEGG" id="gga:426516"/>
<dbReference type="CTD" id="426516"/>
<dbReference type="VEuPathDB" id="HostDB:geneid_426516"/>
<dbReference type="eggNOG" id="KOG2192">
    <property type="taxonomic scope" value="Eukaryota"/>
</dbReference>
<dbReference type="GeneTree" id="ENSGT00940000153434"/>
<dbReference type="InParanoid" id="Q5ZIQ3"/>
<dbReference type="OrthoDB" id="1937934at2759"/>
<dbReference type="PhylomeDB" id="Q5ZIQ3"/>
<dbReference type="PRO" id="PR:Q5ZIQ3"/>
<dbReference type="Proteomes" id="UP000000539">
    <property type="component" value="Unassembled WGS sequence"/>
</dbReference>
<dbReference type="GO" id="GO:0000785">
    <property type="term" value="C:chromatin"/>
    <property type="evidence" value="ECO:0000250"/>
    <property type="project" value="UniProtKB"/>
</dbReference>
<dbReference type="GO" id="GO:0005737">
    <property type="term" value="C:cytoplasm"/>
    <property type="evidence" value="ECO:0000250"/>
    <property type="project" value="UniProtKB"/>
</dbReference>
<dbReference type="GO" id="GO:0005654">
    <property type="term" value="C:nucleoplasm"/>
    <property type="evidence" value="ECO:0007669"/>
    <property type="project" value="UniProtKB-SubCell"/>
</dbReference>
<dbReference type="GO" id="GO:0005634">
    <property type="term" value="C:nucleus"/>
    <property type="evidence" value="ECO:0000250"/>
    <property type="project" value="UniProtKB"/>
</dbReference>
<dbReference type="GO" id="GO:1990904">
    <property type="term" value="C:ribonucleoprotein complex"/>
    <property type="evidence" value="ECO:0000250"/>
    <property type="project" value="UniProtKB"/>
</dbReference>
<dbReference type="GO" id="GO:0005681">
    <property type="term" value="C:spliceosomal complex"/>
    <property type="evidence" value="ECO:0007669"/>
    <property type="project" value="UniProtKB-KW"/>
</dbReference>
<dbReference type="GO" id="GO:0003677">
    <property type="term" value="F:DNA binding"/>
    <property type="evidence" value="ECO:0007669"/>
    <property type="project" value="UniProtKB-KW"/>
</dbReference>
<dbReference type="GO" id="GO:0003723">
    <property type="term" value="F:RNA binding"/>
    <property type="evidence" value="ECO:0007669"/>
    <property type="project" value="UniProtKB-KW"/>
</dbReference>
<dbReference type="GO" id="GO:0006397">
    <property type="term" value="P:mRNA processing"/>
    <property type="evidence" value="ECO:0007669"/>
    <property type="project" value="UniProtKB-KW"/>
</dbReference>
<dbReference type="GO" id="GO:0045892">
    <property type="term" value="P:negative regulation of DNA-templated transcription"/>
    <property type="evidence" value="ECO:0000250"/>
    <property type="project" value="UniProtKB"/>
</dbReference>
<dbReference type="GO" id="GO:0008380">
    <property type="term" value="P:RNA splicing"/>
    <property type="evidence" value="ECO:0007669"/>
    <property type="project" value="UniProtKB-KW"/>
</dbReference>
<dbReference type="CDD" id="cd22432">
    <property type="entry name" value="KH-I_HNRNPK_rpt1"/>
    <property type="match status" value="1"/>
</dbReference>
<dbReference type="CDD" id="cd22433">
    <property type="entry name" value="KH-I_HNRNPK_rpt2"/>
    <property type="match status" value="1"/>
</dbReference>
<dbReference type="CDD" id="cd22434">
    <property type="entry name" value="KH-I_HNRNPK_rpt3"/>
    <property type="match status" value="1"/>
</dbReference>
<dbReference type="FunFam" id="3.30.1370.10:FF:000021">
    <property type="entry name" value="Heterogeneous nuclear ribonucleoprotein K, like"/>
    <property type="match status" value="1"/>
</dbReference>
<dbReference type="FunFam" id="3.30.1370.10:FF:000023">
    <property type="entry name" value="Heterogeneous nuclear ribonucleoprotein K, like"/>
    <property type="match status" value="1"/>
</dbReference>
<dbReference type="FunFam" id="3.30.1370.10:FF:000025">
    <property type="entry name" value="Heterogeneous nuclear ribonucleoprotein K, like"/>
    <property type="match status" value="1"/>
</dbReference>
<dbReference type="Gene3D" id="3.30.1370.10">
    <property type="entry name" value="K Homology domain, type 1"/>
    <property type="match status" value="3"/>
</dbReference>
<dbReference type="InterPro" id="IPR004087">
    <property type="entry name" value="KH_dom"/>
</dbReference>
<dbReference type="InterPro" id="IPR004088">
    <property type="entry name" value="KH_dom_type_1"/>
</dbReference>
<dbReference type="InterPro" id="IPR036612">
    <property type="entry name" value="KH_dom_type_1_sf"/>
</dbReference>
<dbReference type="InterPro" id="IPR012987">
    <property type="entry name" value="ROK_N"/>
</dbReference>
<dbReference type="PANTHER" id="PTHR10288">
    <property type="entry name" value="KH DOMAIN CONTAINING RNA BINDING PROTEIN"/>
    <property type="match status" value="1"/>
</dbReference>
<dbReference type="Pfam" id="PF00013">
    <property type="entry name" value="KH_1"/>
    <property type="match status" value="3"/>
</dbReference>
<dbReference type="Pfam" id="PF08067">
    <property type="entry name" value="ROKNT"/>
    <property type="match status" value="1"/>
</dbReference>
<dbReference type="SMART" id="SM00322">
    <property type="entry name" value="KH"/>
    <property type="match status" value="3"/>
</dbReference>
<dbReference type="SUPFAM" id="SSF54791">
    <property type="entry name" value="Eukaryotic type KH-domain (KH-domain type I)"/>
    <property type="match status" value="3"/>
</dbReference>
<dbReference type="PROSITE" id="PS50084">
    <property type="entry name" value="KH_TYPE_1"/>
    <property type="match status" value="3"/>
</dbReference>
<gene>
    <name type="primary">HNRNPK</name>
    <name type="synonym">HNRPK</name>
    <name type="ORF">RCJMB04_24e23</name>
</gene>
<keyword id="KW-0010">Activator</keyword>
<keyword id="KW-0963">Cytoplasm</keyword>
<keyword id="KW-0238">DNA-binding</keyword>
<keyword id="KW-0488">Methylation</keyword>
<keyword id="KW-0507">mRNA processing</keyword>
<keyword id="KW-0508">mRNA splicing</keyword>
<keyword id="KW-0539">Nucleus</keyword>
<keyword id="KW-0597">Phosphoprotein</keyword>
<keyword id="KW-1185">Reference proteome</keyword>
<keyword id="KW-0677">Repeat</keyword>
<keyword id="KW-0678">Repressor</keyword>
<keyword id="KW-0687">Ribonucleoprotein</keyword>
<keyword id="KW-0694">RNA-binding</keyword>
<keyword id="KW-0747">Spliceosome</keyword>
<keyword id="KW-0804">Transcription</keyword>
<keyword id="KW-0805">Transcription regulation</keyword>
<feature type="chain" id="PRO_0000288797" description="Heterogeneous nuclear ribonucleoprotein K">
    <location>
        <begin position="1"/>
        <end position="427"/>
    </location>
</feature>
<feature type="domain" description="KH 1" evidence="3">
    <location>
        <begin position="39"/>
        <end position="101"/>
    </location>
</feature>
<feature type="repeat" description="1-1">
    <location>
        <begin position="51"/>
        <end position="73"/>
    </location>
</feature>
<feature type="repeat" description="3-1">
    <location>
        <begin position="56"/>
        <end position="59"/>
    </location>
</feature>
<feature type="domain" description="KH 2" evidence="3">
    <location>
        <begin position="117"/>
        <end position="182"/>
    </location>
</feature>
<feature type="repeat" description="2-1">
    <location>
        <begin position="218"/>
        <end position="223"/>
    </location>
</feature>
<feature type="repeat" description="3-2">
    <location>
        <begin position="230"/>
        <end position="233"/>
    </location>
</feature>
<feature type="repeat" description="3-3">
    <location>
        <begin position="240"/>
        <end position="243"/>
    </location>
</feature>
<feature type="repeat" description="3-4">
    <location>
        <begin position="268"/>
        <end position="271"/>
    </location>
</feature>
<feature type="repeat" description="2-2">
    <location>
        <begin position="297"/>
        <end position="302"/>
    </location>
</feature>
<feature type="domain" description="KH 3" evidence="3">
    <location>
        <begin position="351"/>
        <end position="415"/>
    </location>
</feature>
<feature type="repeat" description="1-2">
    <location>
        <begin position="363"/>
        <end position="385"/>
    </location>
</feature>
<feature type="repeat" description="3-5">
    <location>
        <begin position="368"/>
        <end position="371"/>
    </location>
</feature>
<feature type="region of interest" description="Disordered" evidence="4">
    <location>
        <begin position="1"/>
        <end position="34"/>
    </location>
</feature>
<feature type="region of interest" description="2 X 22 AA approximate repeats">
    <location>
        <begin position="51"/>
        <end position="385"/>
    </location>
</feature>
<feature type="region of interest" description="5 X 4 AA repeats of G-X-G-G">
    <location>
        <begin position="56"/>
        <end position="371"/>
    </location>
</feature>
<feature type="region of interest" description="RNA-binding RGG-box" evidence="1">
    <location>
        <begin position="209"/>
        <end position="246"/>
    </location>
</feature>
<feature type="region of interest" description="2 X 6 AA approximate repeats">
    <location>
        <begin position="218"/>
        <end position="302"/>
    </location>
</feature>
<feature type="region of interest" description="Disordered" evidence="4">
    <location>
        <begin position="221"/>
        <end position="305"/>
    </location>
</feature>
<feature type="compositionally biased region" description="Basic and acidic residues" evidence="4">
    <location>
        <begin position="16"/>
        <end position="34"/>
    </location>
</feature>
<feature type="compositionally biased region" description="Basic and acidic residues" evidence="4">
    <location>
        <begin position="249"/>
        <end position="258"/>
    </location>
</feature>
<feature type="compositionally biased region" description="Basic and acidic residues" evidence="4">
    <location>
        <begin position="295"/>
        <end position="305"/>
    </location>
</feature>
<comment type="function">
    <text evidence="1 2">One of the major pre-mRNA-binding proteins. Binds tenaciously to poly(C) sequences. Likely to play a role in the nuclear metabolism of hnRNAs, particularly for pre-mRNAs that contain cytidine-rich sequences. Can also bind poly(C) single-stranded DNA. May play an important role in p53/TP53 response to DNA damage, acting at the level of both transcription activation and repression (By similarity). As part of a ribonucleoprotein complex, may negatively regulate the transcription of genes involved in neuronal differentiation (By similarity).</text>
</comment>
<comment type="subcellular location">
    <subcellularLocation>
        <location evidence="2">Cytoplasm</location>
    </subcellularLocation>
    <subcellularLocation>
        <location evidence="2">Nucleus</location>
        <location evidence="2">Nucleoplasm</location>
    </subcellularLocation>
</comment>
<reference key="1">
    <citation type="journal article" date="2005" name="Genome Biol.">
        <title>Full-length cDNAs from chicken bursal lymphocytes to facilitate gene function analysis.</title>
        <authorList>
            <person name="Caldwell R.B."/>
            <person name="Kierzek A.M."/>
            <person name="Arakawa H."/>
            <person name="Bezzubov Y."/>
            <person name="Zaim J."/>
            <person name="Fiedler P."/>
            <person name="Kutter S."/>
            <person name="Blagodatski A."/>
            <person name="Kostovska D."/>
            <person name="Koter M."/>
            <person name="Plachy J."/>
            <person name="Carninci P."/>
            <person name="Hayashizaki Y."/>
            <person name="Buerstedde J.-M."/>
        </authorList>
    </citation>
    <scope>NUCLEOTIDE SEQUENCE [LARGE SCALE MRNA]</scope>
    <source>
        <strain>CB</strain>
        <tissue>Bursa of Fabricius</tissue>
    </source>
</reference>
<organism>
    <name type="scientific">Gallus gallus</name>
    <name type="common">Chicken</name>
    <dbReference type="NCBI Taxonomy" id="9031"/>
    <lineage>
        <taxon>Eukaryota</taxon>
        <taxon>Metazoa</taxon>
        <taxon>Chordata</taxon>
        <taxon>Craniata</taxon>
        <taxon>Vertebrata</taxon>
        <taxon>Euteleostomi</taxon>
        <taxon>Archelosauria</taxon>
        <taxon>Archosauria</taxon>
        <taxon>Dinosauria</taxon>
        <taxon>Saurischia</taxon>
        <taxon>Theropoda</taxon>
        <taxon>Coelurosauria</taxon>
        <taxon>Aves</taxon>
        <taxon>Neognathae</taxon>
        <taxon>Galloanserae</taxon>
        <taxon>Galliformes</taxon>
        <taxon>Phasianidae</taxon>
        <taxon>Phasianinae</taxon>
        <taxon>Gallus</taxon>
    </lineage>
</organism>
<accession>Q5ZIQ3</accession>
<proteinExistence type="evidence at transcript level"/>
<protein>
    <recommendedName>
        <fullName>Heterogeneous nuclear ribonucleoprotein K</fullName>
        <shortName>hnRNP K</shortName>
    </recommendedName>
</protein>